<protein>
    <recommendedName>
        <fullName evidence="1">Ribosomal RNA small subunit methyltransferase A</fullName>
        <ecNumber evidence="1">2.1.1.182</ecNumber>
    </recommendedName>
    <alternativeName>
        <fullName evidence="1">16S rRNA (adenine(1518)-N(6)/adenine(1519)-N(6))-dimethyltransferase</fullName>
    </alternativeName>
    <alternativeName>
        <fullName evidence="1">16S rRNA dimethyladenosine transferase</fullName>
    </alternativeName>
    <alternativeName>
        <fullName evidence="1">16S rRNA dimethylase</fullName>
    </alternativeName>
    <alternativeName>
        <fullName evidence="1">S-adenosylmethionine-6-N', N'-adenosyl(rRNA) dimethyltransferase</fullName>
    </alternativeName>
</protein>
<gene>
    <name evidence="1" type="primary">rsmA</name>
    <name evidence="1" type="synonym">ksgA</name>
    <name type="ordered locus">BUsg_134</name>
</gene>
<comment type="function">
    <text evidence="1">Specifically dimethylates two adjacent adenosines (A1518 and A1519) in the loop of a conserved hairpin near the 3'-end of 16S rRNA in the 30S particle. May play a critical role in biogenesis of 30S subunits.</text>
</comment>
<comment type="catalytic activity">
    <reaction evidence="1">
        <text>adenosine(1518)/adenosine(1519) in 16S rRNA + 4 S-adenosyl-L-methionine = N(6)-dimethyladenosine(1518)/N(6)-dimethyladenosine(1519) in 16S rRNA + 4 S-adenosyl-L-homocysteine + 4 H(+)</text>
        <dbReference type="Rhea" id="RHEA:19609"/>
        <dbReference type="Rhea" id="RHEA-COMP:10232"/>
        <dbReference type="Rhea" id="RHEA-COMP:10233"/>
        <dbReference type="ChEBI" id="CHEBI:15378"/>
        <dbReference type="ChEBI" id="CHEBI:57856"/>
        <dbReference type="ChEBI" id="CHEBI:59789"/>
        <dbReference type="ChEBI" id="CHEBI:74411"/>
        <dbReference type="ChEBI" id="CHEBI:74493"/>
        <dbReference type="EC" id="2.1.1.182"/>
    </reaction>
</comment>
<comment type="subcellular location">
    <subcellularLocation>
        <location evidence="1">Cytoplasm</location>
    </subcellularLocation>
</comment>
<comment type="similarity">
    <text evidence="1">Belongs to the class I-like SAM-binding methyltransferase superfamily. rRNA adenine N(6)-methyltransferase family. RsmA subfamily.</text>
</comment>
<name>RSMA_BUCAP</name>
<organism>
    <name type="scientific">Buchnera aphidicola subsp. Schizaphis graminum (strain Sg)</name>
    <dbReference type="NCBI Taxonomy" id="198804"/>
    <lineage>
        <taxon>Bacteria</taxon>
        <taxon>Pseudomonadati</taxon>
        <taxon>Pseudomonadota</taxon>
        <taxon>Gammaproteobacteria</taxon>
        <taxon>Enterobacterales</taxon>
        <taxon>Erwiniaceae</taxon>
        <taxon>Buchnera</taxon>
    </lineage>
</organism>
<keyword id="KW-0963">Cytoplasm</keyword>
<keyword id="KW-0489">Methyltransferase</keyword>
<keyword id="KW-0694">RNA-binding</keyword>
<keyword id="KW-0698">rRNA processing</keyword>
<keyword id="KW-0949">S-adenosyl-L-methionine</keyword>
<keyword id="KW-0808">Transferase</keyword>
<sequence>MKKKIKKHLPLKRFSQNFLINQNLIKKIVKFINPQLKQTLVEIGPGLGALTKPICNIVDELIVIEIDLNLLNFLKKYSFYSKLIVFCQDALIFDYLNLFYKKNKLIRIFGNLPYHISTSLLFCFFEKNKIIQDMNFMLQKEVAERLIAFPGTKSYGRLSIIAQYYCNIKIIFNVASENFRPIPKIDSTFVNLVPHKKSPYFTHDIKVLSYITNLAFQKRRKILRHSLGKIFSEKIFLKLNVDPKLRAENLSILQYCQLSNYIIENDILKNKNFN</sequence>
<reference key="1">
    <citation type="journal article" date="2002" name="Science">
        <title>50 million years of genomic stasis in endosymbiotic bacteria.</title>
        <authorList>
            <person name="Tamas I."/>
            <person name="Klasson L."/>
            <person name="Canbaeck B."/>
            <person name="Naeslund A.K."/>
            <person name="Eriksson A.-S."/>
            <person name="Wernegreen J.J."/>
            <person name="Sandstroem J.P."/>
            <person name="Moran N.A."/>
            <person name="Andersson S.G.E."/>
        </authorList>
    </citation>
    <scope>NUCLEOTIDE SEQUENCE [LARGE SCALE GENOMIC DNA]</scope>
    <source>
        <strain>Sg</strain>
    </source>
</reference>
<dbReference type="EC" id="2.1.1.182" evidence="1"/>
<dbReference type="EMBL" id="AE013218">
    <property type="protein sequence ID" value="AAM67702.1"/>
    <property type="molecule type" value="Genomic_DNA"/>
</dbReference>
<dbReference type="RefSeq" id="WP_011053669.1">
    <property type="nucleotide sequence ID" value="NC_004061.1"/>
</dbReference>
<dbReference type="SMR" id="Q8KA00"/>
<dbReference type="STRING" id="198804.BUsg_134"/>
<dbReference type="GeneID" id="93003604"/>
<dbReference type="KEGG" id="bas:BUsg_134"/>
<dbReference type="eggNOG" id="COG0030">
    <property type="taxonomic scope" value="Bacteria"/>
</dbReference>
<dbReference type="HOGENOM" id="CLU_041220_0_1_6"/>
<dbReference type="Proteomes" id="UP000000416">
    <property type="component" value="Chromosome"/>
</dbReference>
<dbReference type="GO" id="GO:0005829">
    <property type="term" value="C:cytosol"/>
    <property type="evidence" value="ECO:0007669"/>
    <property type="project" value="TreeGrafter"/>
</dbReference>
<dbReference type="GO" id="GO:0052908">
    <property type="term" value="F:16S rRNA (adenine(1518)-N(6)/adenine(1519)-N(6))-dimethyltransferase activity"/>
    <property type="evidence" value="ECO:0007669"/>
    <property type="project" value="UniProtKB-EC"/>
</dbReference>
<dbReference type="GO" id="GO:0003723">
    <property type="term" value="F:RNA binding"/>
    <property type="evidence" value="ECO:0007669"/>
    <property type="project" value="UniProtKB-KW"/>
</dbReference>
<dbReference type="FunFam" id="1.10.8.100:FF:000001">
    <property type="entry name" value="Ribosomal RNA small subunit methyltransferase A"/>
    <property type="match status" value="1"/>
</dbReference>
<dbReference type="Gene3D" id="1.10.8.100">
    <property type="entry name" value="Ribosomal RNA adenine dimethylase-like, domain 2"/>
    <property type="match status" value="1"/>
</dbReference>
<dbReference type="Gene3D" id="3.40.50.150">
    <property type="entry name" value="Vaccinia Virus protein VP39"/>
    <property type="match status" value="1"/>
</dbReference>
<dbReference type="HAMAP" id="MF_00607">
    <property type="entry name" value="16SrRNA_methyltr_A"/>
    <property type="match status" value="1"/>
</dbReference>
<dbReference type="InterPro" id="IPR001737">
    <property type="entry name" value="KsgA/Erm"/>
</dbReference>
<dbReference type="InterPro" id="IPR023165">
    <property type="entry name" value="rRNA_Ade_diMease-like_C"/>
</dbReference>
<dbReference type="InterPro" id="IPR020596">
    <property type="entry name" value="rRNA_Ade_Mease_Trfase_CS"/>
</dbReference>
<dbReference type="InterPro" id="IPR020598">
    <property type="entry name" value="rRNA_Ade_methylase_Trfase_N"/>
</dbReference>
<dbReference type="InterPro" id="IPR011530">
    <property type="entry name" value="rRNA_adenine_dimethylase"/>
</dbReference>
<dbReference type="InterPro" id="IPR029063">
    <property type="entry name" value="SAM-dependent_MTases_sf"/>
</dbReference>
<dbReference type="NCBIfam" id="TIGR00755">
    <property type="entry name" value="ksgA"/>
    <property type="match status" value="1"/>
</dbReference>
<dbReference type="PANTHER" id="PTHR11727">
    <property type="entry name" value="DIMETHYLADENOSINE TRANSFERASE"/>
    <property type="match status" value="1"/>
</dbReference>
<dbReference type="PANTHER" id="PTHR11727:SF7">
    <property type="entry name" value="DIMETHYLADENOSINE TRANSFERASE-RELATED"/>
    <property type="match status" value="1"/>
</dbReference>
<dbReference type="Pfam" id="PF00398">
    <property type="entry name" value="RrnaAD"/>
    <property type="match status" value="1"/>
</dbReference>
<dbReference type="SMART" id="SM00650">
    <property type="entry name" value="rADc"/>
    <property type="match status" value="1"/>
</dbReference>
<dbReference type="SUPFAM" id="SSF53335">
    <property type="entry name" value="S-adenosyl-L-methionine-dependent methyltransferases"/>
    <property type="match status" value="1"/>
</dbReference>
<dbReference type="PROSITE" id="PS01131">
    <property type="entry name" value="RRNA_A_DIMETH"/>
    <property type="match status" value="1"/>
</dbReference>
<dbReference type="PROSITE" id="PS51689">
    <property type="entry name" value="SAM_RNA_A_N6_MT"/>
    <property type="match status" value="1"/>
</dbReference>
<proteinExistence type="inferred from homology"/>
<evidence type="ECO:0000255" key="1">
    <source>
        <dbReference type="HAMAP-Rule" id="MF_00607"/>
    </source>
</evidence>
<feature type="chain" id="PRO_0000101500" description="Ribosomal RNA small subunit methyltransferase A">
    <location>
        <begin position="1"/>
        <end position="274"/>
    </location>
</feature>
<feature type="binding site" evidence="1">
    <location>
        <position position="17"/>
    </location>
    <ligand>
        <name>S-adenosyl-L-methionine</name>
        <dbReference type="ChEBI" id="CHEBI:59789"/>
    </ligand>
</feature>
<feature type="binding site" evidence="1">
    <location>
        <position position="19"/>
    </location>
    <ligand>
        <name>S-adenosyl-L-methionine</name>
        <dbReference type="ChEBI" id="CHEBI:59789"/>
    </ligand>
</feature>
<feature type="binding site" evidence="1">
    <location>
        <position position="44"/>
    </location>
    <ligand>
        <name>S-adenosyl-L-methionine</name>
        <dbReference type="ChEBI" id="CHEBI:59789"/>
    </ligand>
</feature>
<feature type="binding site" evidence="1">
    <location>
        <position position="65"/>
    </location>
    <ligand>
        <name>S-adenosyl-L-methionine</name>
        <dbReference type="ChEBI" id="CHEBI:59789"/>
    </ligand>
</feature>
<feature type="binding site" evidence="1">
    <location>
        <position position="89"/>
    </location>
    <ligand>
        <name>S-adenosyl-L-methionine</name>
        <dbReference type="ChEBI" id="CHEBI:59789"/>
    </ligand>
</feature>
<feature type="binding site" evidence="1">
    <location>
        <position position="111"/>
    </location>
    <ligand>
        <name>S-adenosyl-L-methionine</name>
        <dbReference type="ChEBI" id="CHEBI:59789"/>
    </ligand>
</feature>
<accession>Q8KA00</accession>